<feature type="chain" id="PRO_0000091496" description="Tetracycline resistance protein TetM from transposon Tn916">
    <location>
        <begin position="1"/>
        <end position="639"/>
    </location>
</feature>
<feature type="domain" description="tr-type G" evidence="2">
    <location>
        <begin position="1"/>
        <end position="242"/>
    </location>
</feature>
<feature type="binding site" evidence="1">
    <location>
        <begin position="10"/>
        <end position="17"/>
    </location>
    <ligand>
        <name>GTP</name>
        <dbReference type="ChEBI" id="CHEBI:37565"/>
    </ligand>
</feature>
<feature type="binding site" evidence="1">
    <location>
        <begin position="74"/>
        <end position="78"/>
    </location>
    <ligand>
        <name>GTP</name>
        <dbReference type="ChEBI" id="CHEBI:37565"/>
    </ligand>
</feature>
<feature type="binding site" evidence="1">
    <location>
        <begin position="128"/>
        <end position="131"/>
    </location>
    <ligand>
        <name>GTP</name>
        <dbReference type="ChEBI" id="CHEBI:37565"/>
    </ligand>
</feature>
<name>TET9_ENTFL</name>
<sequence length="639" mass="72464">MKIINIGVLAHVDAGKTTLTESLLYNSGAITELGSVDKGTTRTDNTLLERQRGITIQTGITSFQWENTKVNIIDTPGHMDFLAEVYRSLSVLDGAILLISAKDGVQAQTRILFHALRKMGIPTIFFINKIDQNGIDLSTVYQDIKEKLSAEIVIKQKVELYPNVCVTNFTESEQWDTVIEGNDDLLEKYMSGKSLEALELEQEESIRFQNCSLFPLYHGSAKSNIGIDNLIEVITNKFYSSTHRGPSELCGNVFKIEYTKKRQRLAYIRLYSGVLHLRDSVRVSEKEKIKVTEMYTSINGELCKIDRAYSGEIVILQNEFLKLNSVLGDTKLLPQRKKIENPHPLLQTTVEPSKPEQREMLLDALLEISDSDPLLRYYVDSTTHEIILSFLGKVQMEVISALLQEKYHVEIEITEPTVIYMERPLKNAEYTIHIEVPPNPFWASIGLSVSPLPLGSGMQYESSVSLGYLNQSFQNAVMEGIRYGCEQGLYGWNVTDCKICFKYGLYYSPVSTPADFRMLAPIVLEQVLKKAGTELLEPYLSFKIYAPQEYLSRAYNDAPKYCANIVDTQLKNNEVILSGEIPARCIQEYRSDLTFFTNGRSVCLTELKGYHVTTGEPVCQPRRPNSRIDKVRYMFNKIT</sequence>
<proteinExistence type="evidence at protein level"/>
<protein>
    <recommendedName>
        <fullName>Tetracycline resistance protein TetM from transposon Tn916</fullName>
        <shortName>TetM(916)</shortName>
    </recommendedName>
</protein>
<keyword id="KW-0002">3D-structure</keyword>
<keyword id="KW-0046">Antibiotic resistance</keyword>
<keyword id="KW-0903">Direct protein sequencing</keyword>
<keyword id="KW-0342">GTP-binding</keyword>
<keyword id="KW-0547">Nucleotide-binding</keyword>
<keyword id="KW-0648">Protein biosynthesis</keyword>
<keyword id="KW-0814">Transposable element</keyword>
<gene>
    <name type="primary">tetM</name>
    <name type="synonym">tet(M)</name>
</gene>
<accession>P21598</accession>
<dbReference type="EMBL" id="X56353">
    <property type="protein sequence ID" value="CAA39796.1"/>
    <property type="molecule type" value="Genomic_DNA"/>
</dbReference>
<dbReference type="PIR" id="S13142">
    <property type="entry name" value="S13142"/>
</dbReference>
<dbReference type="RefSeq" id="WP_063856107.1">
    <property type="nucleotide sequence ID" value="NG_048211.1"/>
</dbReference>
<dbReference type="PDB" id="3J9Y">
    <property type="method" value="EM"/>
    <property type="resolution" value="3.90 A"/>
    <property type="chains" value="w=1-639"/>
</dbReference>
<dbReference type="PDB" id="5KCS">
    <property type="method" value="EM"/>
    <property type="resolution" value="3.90 A"/>
    <property type="chains" value="1w=1-639"/>
</dbReference>
<dbReference type="PDBsum" id="3J9Y"/>
<dbReference type="PDBsum" id="5KCS"/>
<dbReference type="EMDB" id="EMD-2183"/>
<dbReference type="EMDB" id="EMD-6311"/>
<dbReference type="EMDB" id="EMD-8238"/>
<dbReference type="SMR" id="P21598"/>
<dbReference type="IntAct" id="P21598">
    <property type="interactions" value="1"/>
</dbReference>
<dbReference type="GO" id="GO:0005525">
    <property type="term" value="F:GTP binding"/>
    <property type="evidence" value="ECO:0007669"/>
    <property type="project" value="UniProtKB-KW"/>
</dbReference>
<dbReference type="GO" id="GO:0003924">
    <property type="term" value="F:GTPase activity"/>
    <property type="evidence" value="ECO:0007669"/>
    <property type="project" value="InterPro"/>
</dbReference>
<dbReference type="GO" id="GO:0046677">
    <property type="term" value="P:response to antibiotic"/>
    <property type="evidence" value="ECO:0007669"/>
    <property type="project" value="UniProtKB-KW"/>
</dbReference>
<dbReference type="GO" id="GO:0032790">
    <property type="term" value="P:ribosome disassembly"/>
    <property type="evidence" value="ECO:0007669"/>
    <property type="project" value="TreeGrafter"/>
</dbReference>
<dbReference type="GO" id="GO:0006412">
    <property type="term" value="P:translation"/>
    <property type="evidence" value="ECO:0007669"/>
    <property type="project" value="UniProtKB-KW"/>
</dbReference>
<dbReference type="CDD" id="cd03711">
    <property type="entry name" value="Tet_C"/>
    <property type="match status" value="1"/>
</dbReference>
<dbReference type="CDD" id="cd03690">
    <property type="entry name" value="Tet_II"/>
    <property type="match status" value="1"/>
</dbReference>
<dbReference type="CDD" id="cd16258">
    <property type="entry name" value="Tet_III"/>
    <property type="match status" value="1"/>
</dbReference>
<dbReference type="CDD" id="cd01684">
    <property type="entry name" value="Tet_like_IV"/>
    <property type="match status" value="1"/>
</dbReference>
<dbReference type="CDD" id="cd04168">
    <property type="entry name" value="TetM_like"/>
    <property type="match status" value="1"/>
</dbReference>
<dbReference type="Gene3D" id="3.30.230.10">
    <property type="match status" value="1"/>
</dbReference>
<dbReference type="Gene3D" id="3.30.70.240">
    <property type="match status" value="1"/>
</dbReference>
<dbReference type="Gene3D" id="3.30.70.870">
    <property type="entry name" value="Elongation Factor G (Translational Gtpase), domain 3"/>
    <property type="match status" value="1"/>
</dbReference>
<dbReference type="Gene3D" id="3.40.50.300">
    <property type="entry name" value="P-loop containing nucleotide triphosphate hydrolases"/>
    <property type="match status" value="1"/>
</dbReference>
<dbReference type="Gene3D" id="2.40.30.10">
    <property type="entry name" value="Translation factors"/>
    <property type="match status" value="1"/>
</dbReference>
<dbReference type="InterPro" id="IPR053905">
    <property type="entry name" value="EF-G-like_DII"/>
</dbReference>
<dbReference type="InterPro" id="IPR041095">
    <property type="entry name" value="EFG_II"/>
</dbReference>
<dbReference type="InterPro" id="IPR035647">
    <property type="entry name" value="EFG_III/V"/>
</dbReference>
<dbReference type="InterPro" id="IPR000640">
    <property type="entry name" value="EFG_V-like"/>
</dbReference>
<dbReference type="InterPro" id="IPR031157">
    <property type="entry name" value="G_TR_CS"/>
</dbReference>
<dbReference type="InterPro" id="IPR027417">
    <property type="entry name" value="P-loop_NTPase"/>
</dbReference>
<dbReference type="InterPro" id="IPR020568">
    <property type="entry name" value="Ribosomal_Su5_D2-typ_SF"/>
</dbReference>
<dbReference type="InterPro" id="IPR014721">
    <property type="entry name" value="Ribsml_uS5_D2-typ_fold_subgr"/>
</dbReference>
<dbReference type="InterPro" id="IPR005225">
    <property type="entry name" value="Small_GTP-bd"/>
</dbReference>
<dbReference type="InterPro" id="IPR000795">
    <property type="entry name" value="T_Tr_GTP-bd_dom"/>
</dbReference>
<dbReference type="InterPro" id="IPR035650">
    <property type="entry name" value="Tet_C"/>
</dbReference>
<dbReference type="InterPro" id="IPR009000">
    <property type="entry name" value="Transl_B-barrel_sf"/>
</dbReference>
<dbReference type="InterPro" id="IPR005517">
    <property type="entry name" value="Transl_elong_EFG/EF2_IV"/>
</dbReference>
<dbReference type="NCBIfam" id="TIGR00231">
    <property type="entry name" value="small_GTP"/>
    <property type="match status" value="1"/>
</dbReference>
<dbReference type="NCBIfam" id="NF012153">
    <property type="entry name" value="tet_protect"/>
    <property type="match status" value="1"/>
</dbReference>
<dbReference type="NCBIfam" id="NF012155">
    <property type="entry name" value="tet_protect_M"/>
    <property type="match status" value="1"/>
</dbReference>
<dbReference type="NCBIfam" id="NF033148">
    <property type="entry name" value="tet_protect_M_W"/>
    <property type="match status" value="1"/>
</dbReference>
<dbReference type="PANTHER" id="PTHR43261:SF1">
    <property type="entry name" value="RIBOSOME-RELEASING FACTOR 2, MITOCHONDRIAL"/>
    <property type="match status" value="1"/>
</dbReference>
<dbReference type="PANTHER" id="PTHR43261">
    <property type="entry name" value="TRANSLATION ELONGATION FACTOR G-RELATED"/>
    <property type="match status" value="1"/>
</dbReference>
<dbReference type="Pfam" id="PF22042">
    <property type="entry name" value="EF-G_D2"/>
    <property type="match status" value="1"/>
</dbReference>
<dbReference type="Pfam" id="PF00679">
    <property type="entry name" value="EFG_C"/>
    <property type="match status" value="1"/>
</dbReference>
<dbReference type="Pfam" id="PF14492">
    <property type="entry name" value="EFG_III"/>
    <property type="match status" value="1"/>
</dbReference>
<dbReference type="Pfam" id="PF03764">
    <property type="entry name" value="EFG_IV"/>
    <property type="match status" value="1"/>
</dbReference>
<dbReference type="Pfam" id="PF00009">
    <property type="entry name" value="GTP_EFTU"/>
    <property type="match status" value="1"/>
</dbReference>
<dbReference type="PRINTS" id="PR00315">
    <property type="entry name" value="ELONGATNFCT"/>
</dbReference>
<dbReference type="PRINTS" id="PR01037">
    <property type="entry name" value="TCRTETOQM"/>
</dbReference>
<dbReference type="SMART" id="SM00889">
    <property type="entry name" value="EFG_IV"/>
    <property type="match status" value="1"/>
</dbReference>
<dbReference type="SUPFAM" id="SSF54980">
    <property type="entry name" value="EF-G C-terminal domain-like"/>
    <property type="match status" value="2"/>
</dbReference>
<dbReference type="SUPFAM" id="SSF52540">
    <property type="entry name" value="P-loop containing nucleoside triphosphate hydrolases"/>
    <property type="match status" value="1"/>
</dbReference>
<dbReference type="SUPFAM" id="SSF54211">
    <property type="entry name" value="Ribosomal protein S5 domain 2-like"/>
    <property type="match status" value="1"/>
</dbReference>
<dbReference type="SUPFAM" id="SSF50447">
    <property type="entry name" value="Translation proteins"/>
    <property type="match status" value="1"/>
</dbReference>
<dbReference type="PROSITE" id="PS00301">
    <property type="entry name" value="G_TR_1"/>
    <property type="match status" value="1"/>
</dbReference>
<dbReference type="PROSITE" id="PS51722">
    <property type="entry name" value="G_TR_2"/>
    <property type="match status" value="1"/>
</dbReference>
<comment type="function">
    <text>Abolishes the inhibitory effect of tetracyclin on protein synthesis by a non-covalent modification of the ribosomes.</text>
</comment>
<comment type="similarity">
    <text evidence="2">Belongs to the TRAFAC class translation factor GTPase superfamily. Classic translation factor GTPase family. TetM/TetO subfamily.</text>
</comment>
<evidence type="ECO:0000250" key="1"/>
<evidence type="ECO:0000255" key="2">
    <source>
        <dbReference type="PROSITE-ProRule" id="PRU01059"/>
    </source>
</evidence>
<reference key="1">
    <citation type="journal article" date="1990" name="Nucleic Acids Res.">
        <title>Nucleotide sequence of the tet(M) gene of Tn916.</title>
        <authorList>
            <person name="Burdett V."/>
        </authorList>
    </citation>
    <scope>NUCLEOTIDE SEQUENCE [GENOMIC DNA]</scope>
    <source>
        <transposon>Tn916</transposon>
    </source>
</reference>
<reference key="2">
    <citation type="journal article" date="1991" name="J. Biol. Chem.">
        <title>Purification and characterization of Tet(M), a protein that renders ribosomes resistant to tetracycline.</title>
        <authorList>
            <person name="Burdett V."/>
        </authorList>
    </citation>
    <scope>PROTEIN SEQUENCE OF 1-12</scope>
</reference>
<organism>
    <name type="scientific">Enterococcus faecalis</name>
    <name type="common">Streptococcus faecalis</name>
    <dbReference type="NCBI Taxonomy" id="1351"/>
    <lineage>
        <taxon>Bacteria</taxon>
        <taxon>Bacillati</taxon>
        <taxon>Bacillota</taxon>
        <taxon>Bacilli</taxon>
        <taxon>Lactobacillales</taxon>
        <taxon>Enterococcaceae</taxon>
        <taxon>Enterococcus</taxon>
    </lineage>
</organism>